<comment type="function">
    <text evidence="2">Component of the mitochondrial large ribosomal subunit (mt-LSU). The mitochondrial ribosome (mitoribosome) is a large ribonucleoprotein complex responsible for the synthesis of proteins inside mitochondria.</text>
</comment>
<comment type="subunit">
    <text evidence="6">Component of the mitochondrial ribosome large subunit (39S) which comprises a 16S rRNA and about 50 distinct proteins.</text>
</comment>
<comment type="subcellular location">
    <subcellularLocation>
        <location evidence="6">Mitochondrion</location>
    </subcellularLocation>
</comment>
<comment type="PTM">
    <text evidence="1 3">MRPL32 precursor is processed by the m-AAA protease (composed of AFG3L2 and SPG7), which cleaves the N-terminal transit peptide (By similarity). Cleavage by the m-AAA protease takes place prior to assembly into the large subunit, an essential step for mitochondrial ribosome (mitoribosome) assembly (By similarity). Proper processing by the m-AAA protease is dependent on the zinc-binding region within the tightly folded C-terminal domain of MRPL32: zinc-dependent folding halts degradation initiated from the N-terminus and triggers the release of mature MRPL32 (By similarity).</text>
</comment>
<comment type="similarity">
    <text evidence="7">Belongs to the bacterial ribosomal protein bL32 family.</text>
</comment>
<proteinExistence type="evidence at protein level"/>
<dbReference type="EMBL" id="BC110139">
    <property type="protein sequence ID" value="AAI10140.1"/>
    <property type="molecule type" value="mRNA"/>
</dbReference>
<dbReference type="RefSeq" id="NP_001033768.1">
    <property type="nucleotide sequence ID" value="NM_001038679.2"/>
</dbReference>
<dbReference type="SMR" id="Q2TBI6"/>
<dbReference type="FunCoup" id="Q2TBI6">
    <property type="interactions" value="1370"/>
</dbReference>
<dbReference type="STRING" id="9913.ENSBTAP00000001313"/>
<dbReference type="PaxDb" id="9913-ENSBTAP00000001313"/>
<dbReference type="Ensembl" id="ENSBTAT00000001313.5">
    <property type="protein sequence ID" value="ENSBTAP00000001313.4"/>
    <property type="gene ID" value="ENSBTAG00000000991.6"/>
</dbReference>
<dbReference type="GeneID" id="532842"/>
<dbReference type="KEGG" id="bta:532842"/>
<dbReference type="CTD" id="64983"/>
<dbReference type="VEuPathDB" id="HostDB:ENSBTAG00000000991"/>
<dbReference type="VGNC" id="VGNC:31631">
    <property type="gene designation" value="MRPL32"/>
</dbReference>
<dbReference type="eggNOG" id="KOG4080">
    <property type="taxonomic scope" value="Eukaryota"/>
</dbReference>
<dbReference type="GeneTree" id="ENSGT00390000014996"/>
<dbReference type="HOGENOM" id="CLU_116455_1_0_1"/>
<dbReference type="InParanoid" id="Q2TBI6"/>
<dbReference type="OMA" id="VLCPHCY"/>
<dbReference type="OrthoDB" id="2014905at2759"/>
<dbReference type="TreeFam" id="TF106139"/>
<dbReference type="Reactome" id="R-BTA-5389840">
    <property type="pathway name" value="Mitochondrial translation elongation"/>
</dbReference>
<dbReference type="Reactome" id="R-BTA-5419276">
    <property type="pathway name" value="Mitochondrial translation termination"/>
</dbReference>
<dbReference type="Reactome" id="R-BTA-9837999">
    <property type="pathway name" value="Mitochondrial protein degradation"/>
</dbReference>
<dbReference type="Proteomes" id="UP000009136">
    <property type="component" value="Chromosome 4"/>
</dbReference>
<dbReference type="Bgee" id="ENSBTAG00000000991">
    <property type="expression patterns" value="Expressed in oocyte and 107 other cell types or tissues"/>
</dbReference>
<dbReference type="GO" id="GO:0005743">
    <property type="term" value="C:mitochondrial inner membrane"/>
    <property type="evidence" value="ECO:0000304"/>
    <property type="project" value="Reactome"/>
</dbReference>
<dbReference type="GO" id="GO:0005762">
    <property type="term" value="C:mitochondrial large ribosomal subunit"/>
    <property type="evidence" value="ECO:0000250"/>
    <property type="project" value="UniProtKB"/>
</dbReference>
<dbReference type="GO" id="GO:0046872">
    <property type="term" value="F:metal ion binding"/>
    <property type="evidence" value="ECO:0007669"/>
    <property type="project" value="UniProtKB-KW"/>
</dbReference>
<dbReference type="GO" id="GO:0003735">
    <property type="term" value="F:structural constituent of ribosome"/>
    <property type="evidence" value="ECO:0000318"/>
    <property type="project" value="GO_Central"/>
</dbReference>
<dbReference type="GO" id="GO:0006412">
    <property type="term" value="P:translation"/>
    <property type="evidence" value="ECO:0007669"/>
    <property type="project" value="InterPro"/>
</dbReference>
<dbReference type="InterPro" id="IPR051991">
    <property type="entry name" value="Mitoribosomal_protein_bL32"/>
</dbReference>
<dbReference type="InterPro" id="IPR002677">
    <property type="entry name" value="Ribosomal_bL32"/>
</dbReference>
<dbReference type="InterPro" id="IPR011332">
    <property type="entry name" value="Ribosomal_zn-bd"/>
</dbReference>
<dbReference type="NCBIfam" id="TIGR01031">
    <property type="entry name" value="rpmF_bact"/>
    <property type="match status" value="1"/>
</dbReference>
<dbReference type="PANTHER" id="PTHR21026">
    <property type="entry name" value="39S RIBOSOMAL PROTEIN L32, MITOCHONDRIAL"/>
    <property type="match status" value="1"/>
</dbReference>
<dbReference type="PANTHER" id="PTHR21026:SF2">
    <property type="entry name" value="LARGE RIBOSOMAL SUBUNIT PROTEIN BL32M"/>
    <property type="match status" value="1"/>
</dbReference>
<dbReference type="Pfam" id="PF01783">
    <property type="entry name" value="Ribosomal_L32p"/>
    <property type="match status" value="1"/>
</dbReference>
<dbReference type="SUPFAM" id="SSF57829">
    <property type="entry name" value="Zn-binding ribosomal proteins"/>
    <property type="match status" value="1"/>
</dbReference>
<evidence type="ECO:0000250" key="1">
    <source>
        <dbReference type="UniProtKB" id="P25348"/>
    </source>
</evidence>
<evidence type="ECO:0000250" key="2">
    <source>
        <dbReference type="UniProtKB" id="Q9BYC8"/>
    </source>
</evidence>
<evidence type="ECO:0000250" key="3">
    <source>
        <dbReference type="UniProtKB" id="Q9DCI9"/>
    </source>
</evidence>
<evidence type="ECO:0000255" key="4"/>
<evidence type="ECO:0000256" key="5">
    <source>
        <dbReference type="SAM" id="MobiDB-lite"/>
    </source>
</evidence>
<evidence type="ECO:0000269" key="6">
    <source>
    </source>
</evidence>
<evidence type="ECO:0000305" key="7"/>
<keyword id="KW-0903">Direct protein sequencing</keyword>
<keyword id="KW-0479">Metal-binding</keyword>
<keyword id="KW-0496">Mitochondrion</keyword>
<keyword id="KW-1185">Reference proteome</keyword>
<keyword id="KW-0687">Ribonucleoprotein</keyword>
<keyword id="KW-0689">Ribosomal protein</keyword>
<keyword id="KW-0809">Transit peptide</keyword>
<keyword id="KW-0862">Zinc</keyword>
<organism>
    <name type="scientific">Bos taurus</name>
    <name type="common">Bovine</name>
    <dbReference type="NCBI Taxonomy" id="9913"/>
    <lineage>
        <taxon>Eukaryota</taxon>
        <taxon>Metazoa</taxon>
        <taxon>Chordata</taxon>
        <taxon>Craniata</taxon>
        <taxon>Vertebrata</taxon>
        <taxon>Euteleostomi</taxon>
        <taxon>Mammalia</taxon>
        <taxon>Eutheria</taxon>
        <taxon>Laurasiatheria</taxon>
        <taxon>Artiodactyla</taxon>
        <taxon>Ruminantia</taxon>
        <taxon>Pecora</taxon>
        <taxon>Bovidae</taxon>
        <taxon>Bovinae</taxon>
        <taxon>Bos</taxon>
    </lineage>
</organism>
<gene>
    <name type="primary">MRPL32</name>
</gene>
<protein>
    <recommendedName>
        <fullName evidence="7">Large ribosomal subunit protein bL32m</fullName>
    </recommendedName>
    <alternativeName>
        <fullName>39S ribosomal protein L32, mitochondrial</fullName>
        <shortName>L32mt</shortName>
        <shortName>MRP-L32</shortName>
    </alternativeName>
</protein>
<reference key="1">
    <citation type="submission" date="2005-11" db="EMBL/GenBank/DDBJ databases">
        <authorList>
            <consortium name="NIH - Mammalian Gene Collection (MGC) project"/>
        </authorList>
    </citation>
    <scope>NUCLEOTIDE SEQUENCE [LARGE SCALE MRNA]</scope>
    <source>
        <strain>Crossbred X Angus</strain>
        <tissue>Liver</tissue>
    </source>
</reference>
<reference key="2">
    <citation type="journal article" date="2001" name="J. Biol. Chem.">
        <title>Structural compensation for the deficit of rRNA with proteins in the mammalian mitochondrial ribosome. Systematic analysis of protein components of the large ribosomal subunit from mammalian mitochondria.</title>
        <authorList>
            <person name="Suzuki T."/>
            <person name="Terasaki M."/>
            <person name="Takemoto-Hori C."/>
            <person name="Hanada T."/>
            <person name="Ueda T."/>
            <person name="Wada A."/>
            <person name="Watanabe K."/>
        </authorList>
    </citation>
    <scope>PROTEIN SEQUENCE OF 79-97</scope>
    <scope>IDENTIFICATION BY MASS SPECTROMETRY</scope>
    <scope>SUBCELLULAR LOCATION</scope>
    <scope>SUBUNIT</scope>
</reference>
<sequence>MAPTMLVLLVPPFPVARGLLRNCWKQLQGKLLQSRPGFSSPPWGPALAVQGPAIFSEPTNDTSGSTETSSLLDSIFWMAAPKNRRSIEVNRCRRRNPHKLIKVKNNIDFCPECGHLKQKHVLCGYCYEKVRKETAEIRRQIGKQEGGPFKAPTVETVVLYSGETPSEHDQGKRIIERERKRPSWFTQN</sequence>
<accession>Q2TBI6</accession>
<name>RM32_BOVIN</name>
<feature type="transit peptide" description="Mitochondrion" evidence="4">
    <location>
        <begin position="1"/>
        <end status="unknown"/>
    </location>
</feature>
<feature type="chain" id="PRO_0000239740" description="Large ribosomal subunit protein bL32m">
    <location>
        <begin status="unknown"/>
        <end position="188"/>
    </location>
</feature>
<feature type="region of interest" description="Disordered" evidence="5">
    <location>
        <begin position="162"/>
        <end position="188"/>
    </location>
</feature>
<feature type="compositionally biased region" description="Basic and acidic residues" evidence="5">
    <location>
        <begin position="165"/>
        <end position="181"/>
    </location>
</feature>
<feature type="binding site" evidence="2">
    <location>
        <position position="110"/>
    </location>
    <ligand>
        <name>Zn(2+)</name>
        <dbReference type="ChEBI" id="CHEBI:29105"/>
    </ligand>
</feature>
<feature type="binding site" evidence="2">
    <location>
        <position position="113"/>
    </location>
    <ligand>
        <name>Zn(2+)</name>
        <dbReference type="ChEBI" id="CHEBI:29105"/>
    </ligand>
</feature>
<feature type="binding site" evidence="2">
    <location>
        <position position="123"/>
    </location>
    <ligand>
        <name>Zn(2+)</name>
        <dbReference type="ChEBI" id="CHEBI:29105"/>
    </ligand>
</feature>
<feature type="binding site" evidence="2">
    <location>
        <position position="126"/>
    </location>
    <ligand>
        <name>Zn(2+)</name>
        <dbReference type="ChEBI" id="CHEBI:29105"/>
    </ligand>
</feature>